<organism>
    <name type="scientific">Shigella flexneri</name>
    <dbReference type="NCBI Taxonomy" id="623"/>
    <lineage>
        <taxon>Bacteria</taxon>
        <taxon>Pseudomonadati</taxon>
        <taxon>Pseudomonadota</taxon>
        <taxon>Gammaproteobacteria</taxon>
        <taxon>Enterobacterales</taxon>
        <taxon>Enterobacteriaceae</taxon>
        <taxon>Shigella</taxon>
    </lineage>
</organism>
<dbReference type="EC" id="3.6.1.67"/>
<dbReference type="EMBL" id="AE005674">
    <property type="protein sequence ID" value="AAN43431.2"/>
    <property type="status" value="ALT_INIT"/>
    <property type="molecule type" value="Genomic_DNA"/>
</dbReference>
<dbReference type="EMBL" id="AE014073">
    <property type="protein sequence ID" value="AAP17255.1"/>
    <property type="status" value="ALT_INIT"/>
    <property type="molecule type" value="Genomic_DNA"/>
</dbReference>
<dbReference type="RefSeq" id="WP_001300367.1">
    <property type="nucleotide sequence ID" value="NZ_WPGW01000041.1"/>
</dbReference>
<dbReference type="SMR" id="P0AFC2"/>
<dbReference type="STRING" id="198214.SF1875"/>
<dbReference type="PaxDb" id="198214-SF1875"/>
<dbReference type="GeneID" id="75202729"/>
<dbReference type="KEGG" id="sfl:SF1875"/>
<dbReference type="KEGG" id="sfx:S1941"/>
<dbReference type="PATRIC" id="fig|198214.7.peg.2235"/>
<dbReference type="HOGENOM" id="CLU_128620_0_0_6"/>
<dbReference type="Proteomes" id="UP000001006">
    <property type="component" value="Chromosome"/>
</dbReference>
<dbReference type="Proteomes" id="UP000002673">
    <property type="component" value="Chromosome"/>
</dbReference>
<dbReference type="GO" id="GO:0004081">
    <property type="term" value="F:bis(5'-nucleosyl)-tetraphosphatase (asymmetrical) activity"/>
    <property type="evidence" value="ECO:0007669"/>
    <property type="project" value="TreeGrafter"/>
</dbReference>
<dbReference type="GO" id="GO:0008828">
    <property type="term" value="F:dATP diphosphatase activity"/>
    <property type="evidence" value="ECO:0007669"/>
    <property type="project" value="InterPro"/>
</dbReference>
<dbReference type="GO" id="GO:0019177">
    <property type="term" value="F:dihydroneopterin triphosphate pyrophosphohydrolase activity"/>
    <property type="evidence" value="ECO:0007669"/>
    <property type="project" value="UniProtKB-EC"/>
</dbReference>
<dbReference type="GO" id="GO:0046872">
    <property type="term" value="F:metal ion binding"/>
    <property type="evidence" value="ECO:0007669"/>
    <property type="project" value="UniProtKB-KW"/>
</dbReference>
<dbReference type="GO" id="GO:0006167">
    <property type="term" value="P:AMP biosynthetic process"/>
    <property type="evidence" value="ECO:0007669"/>
    <property type="project" value="TreeGrafter"/>
</dbReference>
<dbReference type="GO" id="GO:0006754">
    <property type="term" value="P:ATP biosynthetic process"/>
    <property type="evidence" value="ECO:0007669"/>
    <property type="project" value="TreeGrafter"/>
</dbReference>
<dbReference type="GO" id="GO:0046656">
    <property type="term" value="P:folic acid biosynthetic process"/>
    <property type="evidence" value="ECO:0007669"/>
    <property type="project" value="UniProtKB-KW"/>
</dbReference>
<dbReference type="CDD" id="cd04664">
    <property type="entry name" value="NUDIX_DHNTPase_like"/>
    <property type="match status" value="1"/>
</dbReference>
<dbReference type="FunFam" id="3.90.79.10:FF:000041">
    <property type="entry name" value="Dihydroneopterin triphosphate pyrophosphatase"/>
    <property type="match status" value="1"/>
</dbReference>
<dbReference type="Gene3D" id="3.90.79.10">
    <property type="entry name" value="Nucleoside Triphosphate Pyrophosphohydrolase"/>
    <property type="match status" value="1"/>
</dbReference>
<dbReference type="InterPro" id="IPR003564">
    <property type="entry name" value="DHNTPase"/>
</dbReference>
<dbReference type="InterPro" id="IPR015797">
    <property type="entry name" value="NUDIX_hydrolase-like_dom_sf"/>
</dbReference>
<dbReference type="InterPro" id="IPR020084">
    <property type="entry name" value="NUDIX_hydrolase_CS"/>
</dbReference>
<dbReference type="InterPro" id="IPR000086">
    <property type="entry name" value="NUDIX_hydrolase_dom"/>
</dbReference>
<dbReference type="InterPro" id="IPR051325">
    <property type="entry name" value="Nudix_hydrolase_domain"/>
</dbReference>
<dbReference type="NCBIfam" id="NF006961">
    <property type="entry name" value="PRK09438.1"/>
    <property type="match status" value="1"/>
</dbReference>
<dbReference type="PANTHER" id="PTHR21340:SF0">
    <property type="entry name" value="BIS(5'-NUCLEOSYL)-TETRAPHOSPHATASE [ASYMMETRICAL]"/>
    <property type="match status" value="1"/>
</dbReference>
<dbReference type="PANTHER" id="PTHR21340">
    <property type="entry name" value="DIADENOSINE 5,5-P1,P4-TETRAPHOSPHATE PYROPHOSPHOHYDROLASE MUTT"/>
    <property type="match status" value="1"/>
</dbReference>
<dbReference type="Pfam" id="PF00293">
    <property type="entry name" value="NUDIX"/>
    <property type="match status" value="1"/>
</dbReference>
<dbReference type="PRINTS" id="PR01404">
    <property type="entry name" value="NPPPHYDRLASE"/>
</dbReference>
<dbReference type="SUPFAM" id="SSF55811">
    <property type="entry name" value="Nudix"/>
    <property type="match status" value="1"/>
</dbReference>
<dbReference type="PROSITE" id="PS51462">
    <property type="entry name" value="NUDIX"/>
    <property type="match status" value="1"/>
</dbReference>
<dbReference type="PROSITE" id="PS00893">
    <property type="entry name" value="NUDIX_BOX"/>
    <property type="match status" value="1"/>
</dbReference>
<protein>
    <recommendedName>
        <fullName>Dihydroneopterin triphosphate diphosphatase</fullName>
        <ecNumber>3.6.1.67</ecNumber>
    </recommendedName>
    <alternativeName>
        <fullName>Dihydroneopterin triphosphate pyrophosphatase</fullName>
    </alternativeName>
    <alternativeName>
        <fullName>dATP pyrophosphohydrolase</fullName>
    </alternativeName>
</protein>
<name>NUDB_SHIFL</name>
<sequence>MKDKVYKRPVSILVVIYAQDTKRVLMLQRRDDPDFWQSVTGSVEEGETAPQAAMREVKEEVTIDVVAEQLTLIDCQRTVEFEIFSHLRHRYAPGVTRNTESWFCLALPHERQIVFTEHLAYKWLDAPAAAALTKSWSNRQAIEQFVINAA</sequence>
<feature type="chain" id="PRO_0000056954" description="Dihydroneopterin triphosphate diphosphatase">
    <location>
        <begin position="1"/>
        <end position="150"/>
    </location>
</feature>
<feature type="domain" description="Nudix hydrolase" evidence="4">
    <location>
        <begin position="5"/>
        <end position="146"/>
    </location>
</feature>
<feature type="short sequence motif" description="Nudix box">
    <location>
        <begin position="41"/>
        <end position="62"/>
    </location>
</feature>
<feature type="binding site" evidence="1">
    <location>
        <position position="7"/>
    </location>
    <ligand>
        <name>substrate</name>
    </ligand>
</feature>
<feature type="binding site" evidence="1">
    <location>
        <position position="29"/>
    </location>
    <ligand>
        <name>substrate</name>
    </ligand>
</feature>
<feature type="binding site" evidence="1">
    <location>
        <position position="40"/>
    </location>
    <ligand>
        <name>substrate</name>
    </ligand>
</feature>
<feature type="binding site" evidence="1">
    <location>
        <position position="56"/>
    </location>
    <ligand>
        <name>Mg(2+)</name>
        <dbReference type="ChEBI" id="CHEBI:18420"/>
    </ligand>
</feature>
<feature type="binding site" evidence="1">
    <location>
        <position position="60"/>
    </location>
    <ligand>
        <name>Mg(2+)</name>
        <dbReference type="ChEBI" id="CHEBI:18420"/>
    </ligand>
</feature>
<feature type="binding site" evidence="3">
    <location>
        <begin position="81"/>
        <end position="84"/>
    </location>
    <ligand>
        <name>substrate</name>
    </ligand>
</feature>
<feature type="binding site" evidence="1">
    <location>
        <position position="117"/>
    </location>
    <ligand>
        <name>Mg(2+)</name>
        <dbReference type="ChEBI" id="CHEBI:18420"/>
    </ligand>
</feature>
<feature type="binding site" evidence="3">
    <location>
        <position position="135"/>
    </location>
    <ligand>
        <name>substrate</name>
    </ligand>
</feature>
<comment type="function">
    <text evidence="2">Catalyzes the hydrolysis of dihydroneopterin triphosphate to dihydroneopterin monophosphate and pyrophosphate. Required for efficient folate biosynthesis. Can also hydrolyze nucleoside triphosphates with a preference for dATP.</text>
</comment>
<comment type="catalytic activity">
    <reaction evidence="2">
        <text>7,8-dihydroneopterin 3'-triphosphate + H2O = 7,8-dihydroneopterin 3'-phosphate + diphosphate + H(+)</text>
        <dbReference type="Rhea" id="RHEA:25302"/>
        <dbReference type="ChEBI" id="CHEBI:15377"/>
        <dbReference type="ChEBI" id="CHEBI:15378"/>
        <dbReference type="ChEBI" id="CHEBI:33019"/>
        <dbReference type="ChEBI" id="CHEBI:58462"/>
        <dbReference type="ChEBI" id="CHEBI:58762"/>
        <dbReference type="EC" id="3.6.1.67"/>
    </reaction>
</comment>
<comment type="cofactor">
    <cofactor evidence="2">
        <name>Mg(2+)</name>
        <dbReference type="ChEBI" id="CHEBI:18420"/>
    </cofactor>
    <text evidence="2">Binds 1 Mg(2+) ion per subunit.</text>
</comment>
<comment type="similarity">
    <text evidence="5">Belongs to the Nudix hydrolase family.</text>
</comment>
<comment type="sequence caution" evidence="5">
    <conflict type="erroneous initiation">
        <sequence resource="EMBL-CDS" id="AAN43431"/>
    </conflict>
    <text>Extended N-terminus.</text>
</comment>
<comment type="sequence caution" evidence="5">
    <conflict type="erroneous initiation">
        <sequence resource="EMBL-CDS" id="AAP17255"/>
    </conflict>
    <text>Extended N-terminus.</text>
</comment>
<proteinExistence type="inferred from homology"/>
<accession>P0AFC2</accession>
<accession>P24236</accession>
<evidence type="ECO:0000250" key="1"/>
<evidence type="ECO:0000250" key="2">
    <source>
        <dbReference type="UniProtKB" id="P0AFC0"/>
    </source>
</evidence>
<evidence type="ECO:0000255" key="3"/>
<evidence type="ECO:0000255" key="4">
    <source>
        <dbReference type="PROSITE-ProRule" id="PRU00794"/>
    </source>
</evidence>
<evidence type="ECO:0000305" key="5"/>
<gene>
    <name type="primary">nudB</name>
    <name type="ordered locus">SF1875</name>
    <name type="ordered locus">S1941</name>
</gene>
<keyword id="KW-0289">Folate biosynthesis</keyword>
<keyword id="KW-0378">Hydrolase</keyword>
<keyword id="KW-0460">Magnesium</keyword>
<keyword id="KW-0479">Metal-binding</keyword>
<keyword id="KW-1185">Reference proteome</keyword>
<reference key="1">
    <citation type="journal article" date="2002" name="Nucleic Acids Res.">
        <title>Genome sequence of Shigella flexneri 2a: insights into pathogenicity through comparison with genomes of Escherichia coli K12 and O157.</title>
        <authorList>
            <person name="Jin Q."/>
            <person name="Yuan Z."/>
            <person name="Xu J."/>
            <person name="Wang Y."/>
            <person name="Shen Y."/>
            <person name="Lu W."/>
            <person name="Wang J."/>
            <person name="Liu H."/>
            <person name="Yang J."/>
            <person name="Yang F."/>
            <person name="Zhang X."/>
            <person name="Zhang J."/>
            <person name="Yang G."/>
            <person name="Wu H."/>
            <person name="Qu D."/>
            <person name="Dong J."/>
            <person name="Sun L."/>
            <person name="Xue Y."/>
            <person name="Zhao A."/>
            <person name="Gao Y."/>
            <person name="Zhu J."/>
            <person name="Kan B."/>
            <person name="Ding K."/>
            <person name="Chen S."/>
            <person name="Cheng H."/>
            <person name="Yao Z."/>
            <person name="He B."/>
            <person name="Chen R."/>
            <person name="Ma D."/>
            <person name="Qiang B."/>
            <person name="Wen Y."/>
            <person name="Hou Y."/>
            <person name="Yu J."/>
        </authorList>
    </citation>
    <scope>NUCLEOTIDE SEQUENCE [LARGE SCALE GENOMIC DNA]</scope>
    <source>
        <strain>301 / Serotype 2a</strain>
    </source>
</reference>
<reference key="2">
    <citation type="journal article" date="2003" name="Infect. Immun.">
        <title>Complete genome sequence and comparative genomics of Shigella flexneri serotype 2a strain 2457T.</title>
        <authorList>
            <person name="Wei J."/>
            <person name="Goldberg M.B."/>
            <person name="Burland V."/>
            <person name="Venkatesan M.M."/>
            <person name="Deng W."/>
            <person name="Fournier G."/>
            <person name="Mayhew G.F."/>
            <person name="Plunkett G. III"/>
            <person name="Rose D.J."/>
            <person name="Darling A."/>
            <person name="Mau B."/>
            <person name="Perna N.T."/>
            <person name="Payne S.M."/>
            <person name="Runyen-Janecky L.J."/>
            <person name="Zhou S."/>
            <person name="Schwartz D.C."/>
            <person name="Blattner F.R."/>
        </authorList>
    </citation>
    <scope>NUCLEOTIDE SEQUENCE [LARGE SCALE GENOMIC DNA]</scope>
    <source>
        <strain>ATCC 700930 / 2457T / Serotype 2a</strain>
    </source>
</reference>